<gene>
    <name type="primary">LCD1</name>
    <name type="ordered locus">CAGL0J08393g</name>
</gene>
<feature type="chain" id="PRO_0000227713" description="DNA damage checkpoint protein LCD1">
    <location>
        <begin position="1"/>
        <end position="667"/>
    </location>
</feature>
<feature type="coiled-coil region" evidence="2">
    <location>
        <begin position="28"/>
        <end position="55"/>
    </location>
</feature>
<accession>Q6FNX0</accession>
<reference key="1">
    <citation type="journal article" date="2004" name="Nature">
        <title>Genome evolution in yeasts.</title>
        <authorList>
            <person name="Dujon B."/>
            <person name="Sherman D."/>
            <person name="Fischer G."/>
            <person name="Durrens P."/>
            <person name="Casaregola S."/>
            <person name="Lafontaine I."/>
            <person name="de Montigny J."/>
            <person name="Marck C."/>
            <person name="Neuveglise C."/>
            <person name="Talla E."/>
            <person name="Goffard N."/>
            <person name="Frangeul L."/>
            <person name="Aigle M."/>
            <person name="Anthouard V."/>
            <person name="Babour A."/>
            <person name="Barbe V."/>
            <person name="Barnay S."/>
            <person name="Blanchin S."/>
            <person name="Beckerich J.-M."/>
            <person name="Beyne E."/>
            <person name="Bleykasten C."/>
            <person name="Boisrame A."/>
            <person name="Boyer J."/>
            <person name="Cattolico L."/>
            <person name="Confanioleri F."/>
            <person name="de Daruvar A."/>
            <person name="Despons L."/>
            <person name="Fabre E."/>
            <person name="Fairhead C."/>
            <person name="Ferry-Dumazet H."/>
            <person name="Groppi A."/>
            <person name="Hantraye F."/>
            <person name="Hennequin C."/>
            <person name="Jauniaux N."/>
            <person name="Joyet P."/>
            <person name="Kachouri R."/>
            <person name="Kerrest A."/>
            <person name="Koszul R."/>
            <person name="Lemaire M."/>
            <person name="Lesur I."/>
            <person name="Ma L."/>
            <person name="Muller H."/>
            <person name="Nicaud J.-M."/>
            <person name="Nikolski M."/>
            <person name="Oztas S."/>
            <person name="Ozier-Kalogeropoulos O."/>
            <person name="Pellenz S."/>
            <person name="Potier S."/>
            <person name="Richard G.-F."/>
            <person name="Straub M.-L."/>
            <person name="Suleau A."/>
            <person name="Swennen D."/>
            <person name="Tekaia F."/>
            <person name="Wesolowski-Louvel M."/>
            <person name="Westhof E."/>
            <person name="Wirth B."/>
            <person name="Zeniou-Meyer M."/>
            <person name="Zivanovic Y."/>
            <person name="Bolotin-Fukuhara M."/>
            <person name="Thierry A."/>
            <person name="Bouchier C."/>
            <person name="Caudron B."/>
            <person name="Scarpelli C."/>
            <person name="Gaillardin C."/>
            <person name="Weissenbach J."/>
            <person name="Wincker P."/>
            <person name="Souciet J.-L."/>
        </authorList>
    </citation>
    <scope>NUCLEOTIDE SEQUENCE [LARGE SCALE GENOMIC DNA]</scope>
    <source>
        <strain>ATCC 2001 / BCRC 20586 / JCM 3761 / NBRC 0622 / NRRL Y-65 / CBS 138</strain>
    </source>
</reference>
<evidence type="ECO:0000250" key="1"/>
<evidence type="ECO:0000255" key="2"/>
<organism>
    <name type="scientific">Candida glabrata (strain ATCC 2001 / BCRC 20586 / JCM 3761 / NBRC 0622 / NRRL Y-65 / CBS 138)</name>
    <name type="common">Yeast</name>
    <name type="synonym">Nakaseomyces glabratus</name>
    <dbReference type="NCBI Taxonomy" id="284593"/>
    <lineage>
        <taxon>Eukaryota</taxon>
        <taxon>Fungi</taxon>
        <taxon>Dikarya</taxon>
        <taxon>Ascomycota</taxon>
        <taxon>Saccharomycotina</taxon>
        <taxon>Saccharomycetes</taxon>
        <taxon>Saccharomycetales</taxon>
        <taxon>Saccharomycetaceae</taxon>
        <taxon>Nakaseomyces</taxon>
    </lineage>
</organism>
<protein>
    <recommendedName>
        <fullName>DNA damage checkpoint protein LCD1</fullName>
    </recommendedName>
</protein>
<name>LCD1_CANGA</name>
<sequence>MLRDKLKLLQAQIEQERSKSNYRVNEVKEEFDKEIQKLRQQLQSLEDEKKFLVLESRGINAVNQRIKTSPPEAFSRVSSQHRALNTPDSSHIQEHIPKKRKTEISTQPSIVLNPNRVIKDEVSAFFDCLYVHRIVGVELSTIEILNCIKFEHIDEFNYKLLKINKDTSIGSGIVDFLQSCKKNMKLNELVDSVLEHLATLIKAIIINDQELNFSVPFLVALMVQTILFRPSAVSVNSLKDLFIFTCDLIRKFQIVLKKPLHKSPLEVDLGPQIFQYELIDNLILVYSFDLLESTTKVIRIQQLSETLYMEFFDESLMKSLEAVYKLTLTISFKPVINVIYSMVAVFVTITNIMNNDNLSKPFGSSKWWSDLLTRLYQLLGKRILNFHVFDDTNTNNMHIDRFFDFYSLLRNMGTNSVSPLLAQLVTRGEIKGIPNIVLKDDIIDKYESKKEKGVLSDNLELEKWFVYLKDDILSIIENLMGYFKKDSKITNGEILINLTKLISVEQSQFMDHLIDQDTDVFAVRMNLVEHALSIIYRMWKYYEENITQESIKEVESELVMSLWRIIVCKHASKKICKDDLMEHRILINQMENLHLQDTIDLYEDAFEDMPEYIKEELECSINNGTQQKMQVQYDDIYIEMARYILESKLTNFISVENTDSLYLSMGF</sequence>
<proteinExistence type="inferred from homology"/>
<dbReference type="EMBL" id="CR380956">
    <property type="protein sequence ID" value="CAG61025.1"/>
    <property type="molecule type" value="Genomic_DNA"/>
</dbReference>
<dbReference type="RefSeq" id="XP_448074.1">
    <property type="nucleotide sequence ID" value="XM_448074.1"/>
</dbReference>
<dbReference type="SMR" id="Q6FNX0"/>
<dbReference type="FunCoup" id="Q6FNX0">
    <property type="interactions" value="200"/>
</dbReference>
<dbReference type="STRING" id="284593.Q6FNX0"/>
<dbReference type="KEGG" id="cgr:2889706"/>
<dbReference type="eggNOG" id="ENOG502QQI0">
    <property type="taxonomic scope" value="Eukaryota"/>
</dbReference>
<dbReference type="HOGENOM" id="CLU_383646_0_0_1"/>
<dbReference type="InParanoid" id="Q6FNX0"/>
<dbReference type="OMA" id="IFQYELI"/>
<dbReference type="Proteomes" id="UP000002428">
    <property type="component" value="Chromosome J"/>
</dbReference>
<dbReference type="GO" id="GO:0005737">
    <property type="term" value="C:cytoplasm"/>
    <property type="evidence" value="ECO:0007669"/>
    <property type="project" value="UniProtKB-SubCell"/>
</dbReference>
<dbReference type="GO" id="GO:0005634">
    <property type="term" value="C:nucleus"/>
    <property type="evidence" value="ECO:0007669"/>
    <property type="project" value="UniProtKB-SubCell"/>
</dbReference>
<dbReference type="GO" id="GO:0006325">
    <property type="term" value="P:chromatin organization"/>
    <property type="evidence" value="ECO:0007669"/>
    <property type="project" value="UniProtKB-KW"/>
</dbReference>
<dbReference type="GO" id="GO:0000077">
    <property type="term" value="P:DNA damage checkpoint signaling"/>
    <property type="evidence" value="ECO:0007669"/>
    <property type="project" value="InterPro"/>
</dbReference>
<dbReference type="GO" id="GO:0006281">
    <property type="term" value="P:DNA repair"/>
    <property type="evidence" value="ECO:0007669"/>
    <property type="project" value="UniProtKB-KW"/>
</dbReference>
<dbReference type="InterPro" id="IPR018622">
    <property type="entry name" value="DNA_damage_chkpnt_Lcd1"/>
</dbReference>
<dbReference type="Pfam" id="PF09798">
    <property type="entry name" value="LCD1"/>
    <property type="match status" value="1"/>
</dbReference>
<keyword id="KW-0156">Chromatin regulator</keyword>
<keyword id="KW-0175">Coiled coil</keyword>
<keyword id="KW-0963">Cytoplasm</keyword>
<keyword id="KW-0227">DNA damage</keyword>
<keyword id="KW-0234">DNA repair</keyword>
<keyword id="KW-0539">Nucleus</keyword>
<keyword id="KW-0597">Phosphoprotein</keyword>
<keyword id="KW-1185">Reference proteome</keyword>
<comment type="function">
    <text evidence="1">Forms a complex with the serine/threonine kinase MEC1 which activates checkpoint signaling upon genotoxic stresses. The MEC1-LCD1 complex is recruited to DNA lesions in order to initiates the DNA repair by homologous recombination. Required for cell growth and meiotic recombination (By similarity).</text>
</comment>
<comment type="subunit">
    <text evidence="1">Forms a complex with MEC1.</text>
</comment>
<comment type="subcellular location">
    <subcellularLocation>
        <location evidence="1">Cytoplasm</location>
    </subcellularLocation>
    <subcellularLocation>
        <location evidence="1">Nucleus</location>
    </subcellularLocation>
</comment>